<proteinExistence type="inferred from homology"/>
<name>DNAA_XANE5</name>
<comment type="function">
    <text evidence="1">Plays an essential role in the initiation and regulation of chromosomal replication. ATP-DnaA binds to the origin of replication (oriC) to initiate formation of the DNA replication initiation complex once per cell cycle. Binds the DnaA box (a 9 base pair repeat at the origin) and separates the double-stranded (ds)DNA. Forms a right-handed helical filament on oriC DNA; dsDNA binds to the exterior of the filament while single-stranded (ss)DNA is stabiized in the filament's interior. The ATP-DnaA-oriC complex binds and stabilizes one strand of the AT-rich DNA unwinding element (DUE), permitting loading of DNA polymerase. After initiation quickly degrades to an ADP-DnaA complex that is not apt for DNA replication. Binds acidic phospholipids.</text>
</comment>
<comment type="subunit">
    <text evidence="1">Oligomerizes as a right-handed, spiral filament on DNA at oriC.</text>
</comment>
<comment type="subcellular location">
    <subcellularLocation>
        <location evidence="1">Cytoplasm</location>
    </subcellularLocation>
</comment>
<comment type="domain">
    <text evidence="1">Domain I is involved in oligomerization and binding regulators, domain II is flexibile and of varying length in different bacteria, domain III forms the AAA+ region, while domain IV binds dsDNA.</text>
</comment>
<comment type="similarity">
    <text evidence="1">Belongs to the DnaA family.</text>
</comment>
<accession>Q3BZT1</accession>
<gene>
    <name evidence="1" type="primary">dnaA</name>
    <name type="ordered locus">XCV0001</name>
</gene>
<organism>
    <name type="scientific">Xanthomonas euvesicatoria pv. vesicatoria (strain 85-10)</name>
    <name type="common">Xanthomonas campestris pv. vesicatoria</name>
    <dbReference type="NCBI Taxonomy" id="316273"/>
    <lineage>
        <taxon>Bacteria</taxon>
        <taxon>Pseudomonadati</taxon>
        <taxon>Pseudomonadota</taxon>
        <taxon>Gammaproteobacteria</taxon>
        <taxon>Lysobacterales</taxon>
        <taxon>Lysobacteraceae</taxon>
        <taxon>Xanthomonas</taxon>
    </lineage>
</organism>
<keyword id="KW-0067">ATP-binding</keyword>
<keyword id="KW-0963">Cytoplasm</keyword>
<keyword id="KW-0235">DNA replication</keyword>
<keyword id="KW-0238">DNA-binding</keyword>
<keyword id="KW-0446">Lipid-binding</keyword>
<keyword id="KW-0547">Nucleotide-binding</keyword>
<feature type="chain" id="PRO_1000048757" description="Chromosomal replication initiator protein DnaA">
    <location>
        <begin position="1"/>
        <end position="442"/>
    </location>
</feature>
<feature type="region of interest" description="Domain I, interacts with DnaA modulators" evidence="1">
    <location>
        <begin position="1"/>
        <end position="75"/>
    </location>
</feature>
<feature type="region of interest" description="Domain II" evidence="1">
    <location>
        <begin position="75"/>
        <end position="104"/>
    </location>
</feature>
<feature type="region of interest" description="Domain III, AAA+ region" evidence="1">
    <location>
        <begin position="105"/>
        <end position="322"/>
    </location>
</feature>
<feature type="region of interest" description="Domain IV, binds dsDNA" evidence="1">
    <location>
        <begin position="323"/>
        <end position="442"/>
    </location>
</feature>
<feature type="binding site" evidence="1">
    <location>
        <position position="150"/>
    </location>
    <ligand>
        <name>ATP</name>
        <dbReference type="ChEBI" id="CHEBI:30616"/>
    </ligand>
</feature>
<feature type="binding site" evidence="1">
    <location>
        <position position="152"/>
    </location>
    <ligand>
        <name>ATP</name>
        <dbReference type="ChEBI" id="CHEBI:30616"/>
    </ligand>
</feature>
<feature type="binding site" evidence="1">
    <location>
        <position position="153"/>
    </location>
    <ligand>
        <name>ATP</name>
        <dbReference type="ChEBI" id="CHEBI:30616"/>
    </ligand>
</feature>
<feature type="binding site" evidence="1">
    <location>
        <position position="154"/>
    </location>
    <ligand>
        <name>ATP</name>
        <dbReference type="ChEBI" id="CHEBI:30616"/>
    </ligand>
</feature>
<reference key="1">
    <citation type="journal article" date="2005" name="J. Bacteriol.">
        <title>Insights into genome plasticity and pathogenicity of the plant pathogenic Bacterium Xanthomonas campestris pv. vesicatoria revealed by the complete genome sequence.</title>
        <authorList>
            <person name="Thieme F."/>
            <person name="Koebnik R."/>
            <person name="Bekel T."/>
            <person name="Berger C."/>
            <person name="Boch J."/>
            <person name="Buettner D."/>
            <person name="Caldana C."/>
            <person name="Gaigalat L."/>
            <person name="Goesmann A."/>
            <person name="Kay S."/>
            <person name="Kirchner O."/>
            <person name="Lanz C."/>
            <person name="Linke B."/>
            <person name="McHardy A.C."/>
            <person name="Meyer F."/>
            <person name="Mittenhuber G."/>
            <person name="Nies D.H."/>
            <person name="Niesbach-Kloesgen U."/>
            <person name="Patschkowski T."/>
            <person name="Rueckert C."/>
            <person name="Rupp O."/>
            <person name="Schneiker S."/>
            <person name="Schuster S.C."/>
            <person name="Vorhoelter F.J."/>
            <person name="Weber E."/>
            <person name="Puehler A."/>
            <person name="Bonas U."/>
            <person name="Bartels D."/>
            <person name="Kaiser O."/>
        </authorList>
    </citation>
    <scope>NUCLEOTIDE SEQUENCE [LARGE SCALE GENOMIC DNA]</scope>
    <source>
        <strain>85-10</strain>
    </source>
</reference>
<sequence>MDAWPRCLERLEAEFPPEDVHTWLKPLQAEDRGDSIVLYAPNAFIVDQVRERYLPRIRELLAYFAGNGEVALAVGSRPRAPEPAPAAAAVPSAPQAAPMVPFAGNLDSHYTFANFVEGRSNQLGLAAAIQAAQRPGDRAHNPLLLYGSTGLGKTHLMFAAGNALRQANPAAKVMYLRSEQFFSAMIRALQDKAMDQFKRQFQQIDALLIDDIQFFAGKDRTQEEFFHTFNALFDGRQQIILTCDRYPREVEGLEPRLKSRLAWGLSVAIDPPDFETRAAIVLAKARERGAEIPDDVAFLIAKKMRSNVRDLEGALNTLVARANFTGRSITVEFAQETLRDLLRAQQQAIGIPNIQKTVADYYGLQMKDLLSKRRTRSLARPRQVAMALAKELTEHSLPEIGDAFAGRDHTTVLHACRQIRTLMEADGKLREDWEKLIRKLSE</sequence>
<evidence type="ECO:0000255" key="1">
    <source>
        <dbReference type="HAMAP-Rule" id="MF_00377"/>
    </source>
</evidence>
<protein>
    <recommendedName>
        <fullName evidence="1">Chromosomal replication initiator protein DnaA</fullName>
    </recommendedName>
</protein>
<dbReference type="EMBL" id="AM039952">
    <property type="protein sequence ID" value="CAJ21632.1"/>
    <property type="molecule type" value="Genomic_DNA"/>
</dbReference>
<dbReference type="RefSeq" id="WP_011345769.1">
    <property type="nucleotide sequence ID" value="NZ_CP017190.1"/>
</dbReference>
<dbReference type="SMR" id="Q3BZT1"/>
<dbReference type="STRING" id="456327.BJD11_22945"/>
<dbReference type="KEGG" id="xcv:XCV0001"/>
<dbReference type="eggNOG" id="COG0593">
    <property type="taxonomic scope" value="Bacteria"/>
</dbReference>
<dbReference type="HOGENOM" id="CLU_026910_0_1_6"/>
<dbReference type="Proteomes" id="UP000007069">
    <property type="component" value="Chromosome"/>
</dbReference>
<dbReference type="GO" id="GO:0005737">
    <property type="term" value="C:cytoplasm"/>
    <property type="evidence" value="ECO:0007669"/>
    <property type="project" value="UniProtKB-SubCell"/>
</dbReference>
<dbReference type="GO" id="GO:0005886">
    <property type="term" value="C:plasma membrane"/>
    <property type="evidence" value="ECO:0007669"/>
    <property type="project" value="TreeGrafter"/>
</dbReference>
<dbReference type="GO" id="GO:0005524">
    <property type="term" value="F:ATP binding"/>
    <property type="evidence" value="ECO:0007669"/>
    <property type="project" value="UniProtKB-UniRule"/>
</dbReference>
<dbReference type="GO" id="GO:0016887">
    <property type="term" value="F:ATP hydrolysis activity"/>
    <property type="evidence" value="ECO:0007669"/>
    <property type="project" value="InterPro"/>
</dbReference>
<dbReference type="GO" id="GO:0003688">
    <property type="term" value="F:DNA replication origin binding"/>
    <property type="evidence" value="ECO:0007669"/>
    <property type="project" value="UniProtKB-UniRule"/>
</dbReference>
<dbReference type="GO" id="GO:0008289">
    <property type="term" value="F:lipid binding"/>
    <property type="evidence" value="ECO:0007669"/>
    <property type="project" value="UniProtKB-KW"/>
</dbReference>
<dbReference type="GO" id="GO:0006270">
    <property type="term" value="P:DNA replication initiation"/>
    <property type="evidence" value="ECO:0007669"/>
    <property type="project" value="UniProtKB-UniRule"/>
</dbReference>
<dbReference type="GO" id="GO:0006275">
    <property type="term" value="P:regulation of DNA replication"/>
    <property type="evidence" value="ECO:0007669"/>
    <property type="project" value="UniProtKB-UniRule"/>
</dbReference>
<dbReference type="CDD" id="cd00009">
    <property type="entry name" value="AAA"/>
    <property type="match status" value="1"/>
</dbReference>
<dbReference type="CDD" id="cd06571">
    <property type="entry name" value="Bac_DnaA_C"/>
    <property type="match status" value="1"/>
</dbReference>
<dbReference type="FunFam" id="1.10.1750.10:FF:000001">
    <property type="entry name" value="Chromosomal replication initiator protein DnaA"/>
    <property type="match status" value="1"/>
</dbReference>
<dbReference type="FunFam" id="1.10.8.60:FF:000003">
    <property type="entry name" value="Chromosomal replication initiator protein DnaA"/>
    <property type="match status" value="1"/>
</dbReference>
<dbReference type="FunFam" id="3.40.50.300:FF:000103">
    <property type="entry name" value="Chromosomal replication initiator protein DnaA"/>
    <property type="match status" value="1"/>
</dbReference>
<dbReference type="Gene3D" id="1.10.1750.10">
    <property type="match status" value="1"/>
</dbReference>
<dbReference type="Gene3D" id="1.10.8.60">
    <property type="match status" value="1"/>
</dbReference>
<dbReference type="Gene3D" id="3.30.300.180">
    <property type="match status" value="1"/>
</dbReference>
<dbReference type="Gene3D" id="3.40.50.300">
    <property type="entry name" value="P-loop containing nucleotide triphosphate hydrolases"/>
    <property type="match status" value="1"/>
</dbReference>
<dbReference type="HAMAP" id="MF_00377">
    <property type="entry name" value="DnaA_bact"/>
    <property type="match status" value="1"/>
</dbReference>
<dbReference type="InterPro" id="IPR003593">
    <property type="entry name" value="AAA+_ATPase"/>
</dbReference>
<dbReference type="InterPro" id="IPR001957">
    <property type="entry name" value="Chromosome_initiator_DnaA"/>
</dbReference>
<dbReference type="InterPro" id="IPR020591">
    <property type="entry name" value="Chromosome_initiator_DnaA-like"/>
</dbReference>
<dbReference type="InterPro" id="IPR018312">
    <property type="entry name" value="Chromosome_initiator_DnaA_CS"/>
</dbReference>
<dbReference type="InterPro" id="IPR013159">
    <property type="entry name" value="DnaA_C"/>
</dbReference>
<dbReference type="InterPro" id="IPR013317">
    <property type="entry name" value="DnaA_dom"/>
</dbReference>
<dbReference type="InterPro" id="IPR024633">
    <property type="entry name" value="DnaA_N_dom"/>
</dbReference>
<dbReference type="InterPro" id="IPR038454">
    <property type="entry name" value="DnaA_N_sf"/>
</dbReference>
<dbReference type="InterPro" id="IPR027417">
    <property type="entry name" value="P-loop_NTPase"/>
</dbReference>
<dbReference type="InterPro" id="IPR010921">
    <property type="entry name" value="Trp_repressor/repl_initiator"/>
</dbReference>
<dbReference type="NCBIfam" id="TIGR00362">
    <property type="entry name" value="DnaA"/>
    <property type="match status" value="1"/>
</dbReference>
<dbReference type="PANTHER" id="PTHR30050">
    <property type="entry name" value="CHROMOSOMAL REPLICATION INITIATOR PROTEIN DNAA"/>
    <property type="match status" value="1"/>
</dbReference>
<dbReference type="PANTHER" id="PTHR30050:SF2">
    <property type="entry name" value="CHROMOSOMAL REPLICATION INITIATOR PROTEIN DNAA"/>
    <property type="match status" value="1"/>
</dbReference>
<dbReference type="Pfam" id="PF00308">
    <property type="entry name" value="Bac_DnaA"/>
    <property type="match status" value="1"/>
</dbReference>
<dbReference type="Pfam" id="PF08299">
    <property type="entry name" value="Bac_DnaA_C"/>
    <property type="match status" value="1"/>
</dbReference>
<dbReference type="Pfam" id="PF11638">
    <property type="entry name" value="DnaA_N"/>
    <property type="match status" value="1"/>
</dbReference>
<dbReference type="PRINTS" id="PR00051">
    <property type="entry name" value="DNAA"/>
</dbReference>
<dbReference type="SMART" id="SM00382">
    <property type="entry name" value="AAA"/>
    <property type="match status" value="1"/>
</dbReference>
<dbReference type="SMART" id="SM00760">
    <property type="entry name" value="Bac_DnaA_C"/>
    <property type="match status" value="1"/>
</dbReference>
<dbReference type="SUPFAM" id="SSF52540">
    <property type="entry name" value="P-loop containing nucleoside triphosphate hydrolases"/>
    <property type="match status" value="1"/>
</dbReference>
<dbReference type="SUPFAM" id="SSF48295">
    <property type="entry name" value="TrpR-like"/>
    <property type="match status" value="1"/>
</dbReference>
<dbReference type="PROSITE" id="PS01008">
    <property type="entry name" value="DNAA"/>
    <property type="match status" value="1"/>
</dbReference>